<proteinExistence type="inferred from homology"/>
<sequence length="325" mass="36205">MSWISPELIEILLTVLKAVVILLVVVTCGAFMSFGERRLLGLFQNRYGPNRVGWGGSLQLVADMIKMFFKEDWIPKFSDRVIFTLAPMIAFTSLLLAFAIVPVSPGWVVADLNIGILFFLMMAGLAVYAVLFAGWSSNNKYSLLGAMRASAQTLSYEVFLGLSLMGVVAQAGSFNMTDIVNSQAHVWNVIPQFFGFITFAIAGVAVCHRHPFDQPEAEQELADGYHIEYSGMKFGLFFVGEYIGIVTISALMVTLFFGGWQGPLLPPFIWFALKTAFFMMMFILIRASLPRPRYDQVMSFGWKICLPLTLINLLVTAAVILWQAQ</sequence>
<dbReference type="EC" id="7.1.1.-" evidence="1"/>
<dbReference type="EMBL" id="CP000468">
    <property type="protein sequence ID" value="ABJ01670.1"/>
    <property type="molecule type" value="Genomic_DNA"/>
</dbReference>
<dbReference type="RefSeq" id="WP_000118512.1">
    <property type="nucleotide sequence ID" value="NZ_CADILS010000025.1"/>
</dbReference>
<dbReference type="SMR" id="A1ADD0"/>
<dbReference type="KEGG" id="ecv:APECO1_4283"/>
<dbReference type="HOGENOM" id="CLU_015134_0_1_6"/>
<dbReference type="Proteomes" id="UP000008216">
    <property type="component" value="Chromosome"/>
</dbReference>
<dbReference type="GO" id="GO:0005886">
    <property type="term" value="C:plasma membrane"/>
    <property type="evidence" value="ECO:0007669"/>
    <property type="project" value="UniProtKB-SubCell"/>
</dbReference>
<dbReference type="GO" id="GO:0003954">
    <property type="term" value="F:NADH dehydrogenase activity"/>
    <property type="evidence" value="ECO:0007669"/>
    <property type="project" value="TreeGrafter"/>
</dbReference>
<dbReference type="GO" id="GO:0016655">
    <property type="term" value="F:oxidoreductase activity, acting on NAD(P)H, quinone or similar compound as acceptor"/>
    <property type="evidence" value="ECO:0007669"/>
    <property type="project" value="UniProtKB-UniRule"/>
</dbReference>
<dbReference type="GO" id="GO:0048038">
    <property type="term" value="F:quinone binding"/>
    <property type="evidence" value="ECO:0007669"/>
    <property type="project" value="UniProtKB-KW"/>
</dbReference>
<dbReference type="GO" id="GO:0009060">
    <property type="term" value="P:aerobic respiration"/>
    <property type="evidence" value="ECO:0007669"/>
    <property type="project" value="TreeGrafter"/>
</dbReference>
<dbReference type="HAMAP" id="MF_01350">
    <property type="entry name" value="NDH1_NuoH"/>
    <property type="match status" value="1"/>
</dbReference>
<dbReference type="InterPro" id="IPR001694">
    <property type="entry name" value="NADH_UbQ_OxRdtase_su1/FPO"/>
</dbReference>
<dbReference type="InterPro" id="IPR018086">
    <property type="entry name" value="NADH_UbQ_OxRdtase_su1_CS"/>
</dbReference>
<dbReference type="NCBIfam" id="NF004740">
    <property type="entry name" value="PRK06076.1-1"/>
    <property type="match status" value="1"/>
</dbReference>
<dbReference type="NCBIfam" id="NF004741">
    <property type="entry name" value="PRK06076.1-2"/>
    <property type="match status" value="1"/>
</dbReference>
<dbReference type="PANTHER" id="PTHR11432">
    <property type="entry name" value="NADH DEHYDROGENASE SUBUNIT 1"/>
    <property type="match status" value="1"/>
</dbReference>
<dbReference type="PANTHER" id="PTHR11432:SF3">
    <property type="entry name" value="NADH-UBIQUINONE OXIDOREDUCTASE CHAIN 1"/>
    <property type="match status" value="1"/>
</dbReference>
<dbReference type="Pfam" id="PF00146">
    <property type="entry name" value="NADHdh"/>
    <property type="match status" value="1"/>
</dbReference>
<dbReference type="PROSITE" id="PS00667">
    <property type="entry name" value="COMPLEX1_ND1_1"/>
    <property type="match status" value="1"/>
</dbReference>
<dbReference type="PROSITE" id="PS00668">
    <property type="entry name" value="COMPLEX1_ND1_2"/>
    <property type="match status" value="1"/>
</dbReference>
<organism>
    <name type="scientific">Escherichia coli O1:K1 / APEC</name>
    <dbReference type="NCBI Taxonomy" id="405955"/>
    <lineage>
        <taxon>Bacteria</taxon>
        <taxon>Pseudomonadati</taxon>
        <taxon>Pseudomonadota</taxon>
        <taxon>Gammaproteobacteria</taxon>
        <taxon>Enterobacterales</taxon>
        <taxon>Enterobacteriaceae</taxon>
        <taxon>Escherichia</taxon>
    </lineage>
</organism>
<keyword id="KW-0997">Cell inner membrane</keyword>
<keyword id="KW-1003">Cell membrane</keyword>
<keyword id="KW-0472">Membrane</keyword>
<keyword id="KW-0520">NAD</keyword>
<keyword id="KW-0874">Quinone</keyword>
<keyword id="KW-1185">Reference proteome</keyword>
<keyword id="KW-1278">Translocase</keyword>
<keyword id="KW-0812">Transmembrane</keyword>
<keyword id="KW-1133">Transmembrane helix</keyword>
<keyword id="KW-0830">Ubiquinone</keyword>
<comment type="function">
    <text evidence="1">NDH-1 shuttles electrons from NADH, via FMN and iron-sulfur (Fe-S) centers, to quinones in the respiratory chain. The immediate electron acceptor for the enzyme in this species is believed to be ubiquinone. Couples the redox reaction to proton translocation (for every two electrons transferred, four hydrogen ions are translocated across the cytoplasmic membrane), and thus conserves the redox energy in a proton gradient. This subunit may bind ubiquinone.</text>
</comment>
<comment type="catalytic activity">
    <reaction evidence="1">
        <text>a quinone + NADH + 5 H(+)(in) = a quinol + NAD(+) + 4 H(+)(out)</text>
        <dbReference type="Rhea" id="RHEA:57888"/>
        <dbReference type="ChEBI" id="CHEBI:15378"/>
        <dbReference type="ChEBI" id="CHEBI:24646"/>
        <dbReference type="ChEBI" id="CHEBI:57540"/>
        <dbReference type="ChEBI" id="CHEBI:57945"/>
        <dbReference type="ChEBI" id="CHEBI:132124"/>
    </reaction>
</comment>
<comment type="subunit">
    <text evidence="1">NDH-1 is composed of 13 different subunits. Subunits NuoA, H, J, K, L, M, N constitute the membrane sector of the complex.</text>
</comment>
<comment type="subcellular location">
    <subcellularLocation>
        <location evidence="1">Cell inner membrane</location>
        <topology evidence="1">Multi-pass membrane protein</topology>
    </subcellularLocation>
</comment>
<comment type="similarity">
    <text evidence="1">Belongs to the complex I subunit 1 family.</text>
</comment>
<evidence type="ECO:0000255" key="1">
    <source>
        <dbReference type="HAMAP-Rule" id="MF_01350"/>
    </source>
</evidence>
<protein>
    <recommendedName>
        <fullName evidence="1">NADH-quinone oxidoreductase subunit H</fullName>
        <ecNumber evidence="1">7.1.1.-</ecNumber>
    </recommendedName>
    <alternativeName>
        <fullName evidence="1">NADH dehydrogenase I subunit H</fullName>
    </alternativeName>
    <alternativeName>
        <fullName evidence="1">NDH-1 subunit H</fullName>
    </alternativeName>
</protein>
<feature type="chain" id="PRO_0000298810" description="NADH-quinone oxidoreductase subunit H">
    <location>
        <begin position="1"/>
        <end position="325"/>
    </location>
</feature>
<feature type="transmembrane region" description="Helical" evidence="1">
    <location>
        <begin position="11"/>
        <end position="31"/>
    </location>
</feature>
<feature type="transmembrane region" description="Helical" evidence="1">
    <location>
        <begin position="81"/>
        <end position="101"/>
    </location>
</feature>
<feature type="transmembrane region" description="Helical" evidence="1">
    <location>
        <begin position="114"/>
        <end position="134"/>
    </location>
</feature>
<feature type="transmembrane region" description="Helical" evidence="1">
    <location>
        <begin position="154"/>
        <end position="174"/>
    </location>
</feature>
<feature type="transmembrane region" description="Helical" evidence="1">
    <location>
        <begin position="186"/>
        <end position="206"/>
    </location>
</feature>
<feature type="transmembrane region" description="Helical" evidence="1">
    <location>
        <begin position="237"/>
        <end position="257"/>
    </location>
</feature>
<feature type="transmembrane region" description="Helical" evidence="1">
    <location>
        <begin position="265"/>
        <end position="285"/>
    </location>
</feature>
<feature type="transmembrane region" description="Helical" evidence="1">
    <location>
        <begin position="304"/>
        <end position="324"/>
    </location>
</feature>
<name>NUOH_ECOK1</name>
<reference key="1">
    <citation type="journal article" date="2007" name="J. Bacteriol.">
        <title>The genome sequence of avian pathogenic Escherichia coli strain O1:K1:H7 shares strong similarities with human extraintestinal pathogenic E. coli genomes.</title>
        <authorList>
            <person name="Johnson T.J."/>
            <person name="Kariyawasam S."/>
            <person name="Wannemuehler Y."/>
            <person name="Mangiamele P."/>
            <person name="Johnson S.J."/>
            <person name="Doetkott C."/>
            <person name="Skyberg J.A."/>
            <person name="Lynne A.M."/>
            <person name="Johnson J.R."/>
            <person name="Nolan L.K."/>
        </authorList>
    </citation>
    <scope>NUCLEOTIDE SEQUENCE [LARGE SCALE GENOMIC DNA]</scope>
</reference>
<gene>
    <name evidence="1" type="primary">nuoH</name>
    <name type="ordered locus">Ecok1_21760</name>
    <name type="ORF">APECO1_4283</name>
</gene>
<accession>A1ADD0</accession>